<name>SCNNB_PANTR</name>
<comment type="function">
    <text evidence="3">This is one of the three pore-forming subunits of the heterotrimeric epithelial sodium channel (ENaC), a critical regulator of sodium balance and fluid homeostasis. ENaC operates in epithelial tissues, where it mediates the electrodiffusion of sodium ions from extracellular fluid through the apical membrane of cells, with water following osmotically. It plays a key role in maintaining sodium homeostasis through electrogenic sodium reabsorption in the kidneys. Additionally, ENaC is essential for airway surface liquid homeostasis, which is crucial for proper mucus clearance.</text>
</comment>
<comment type="catalytic activity">
    <reaction evidence="3">
        <text>Na(+)(in) = Na(+)(out)</text>
        <dbReference type="Rhea" id="RHEA:34963"/>
        <dbReference type="ChEBI" id="CHEBI:29101"/>
    </reaction>
</comment>
<comment type="activity regulation">
    <text evidence="3">Originally identified and characterized by its inhibition by the diuretic drug amiloride.</text>
</comment>
<comment type="subunit">
    <text evidence="3">Component of the heterotrimeric epithelial sodium channel (ENaC) composed of an alpha/SCNN1A, a beta/SCNN1B and a gamma/SCNN1G subunit. An additional delta/SCNN1D subunit can replace the alpha/SCNN1A subunit to form an alternative channel with specific properties. Interacts with WWP1 (via WW domains). Interacts with WWP2 (via WW domains); inhibits the channel. Interacts with the full-length immature form of PCSK9 (pro-PCSK9). Interacts (N-glycosylated) with BPIFA1; the interaction is direct and inhibits the proteolytic processing of SCNN1A and SCNN1G and the activation of ENaC.</text>
</comment>
<comment type="subcellular location">
    <subcellularLocation>
        <location evidence="3">Apical cell membrane</location>
        <topology evidence="3">Multi-pass membrane protein</topology>
    </subcellularLocation>
    <subcellularLocation>
        <location evidence="2">Cytoplasmic vesicle membrane</location>
        <topology evidence="3">Multi-pass membrane protein</topology>
    </subcellularLocation>
</comment>
<comment type="PTM">
    <text evidence="2 3">Ubiquitinated. Can be ubiquitinated at multiple sites and undergo monoubiquitination and polyubiquitination. Ubiquitination by NEDD4 or NEDD4L inhibits the ENaC channel through endocytosis, intracellular retention and degradation of its individual subunits (By similarity). However, some studies could not confirm the ubiquitination of this subunit of the ENaC (By similarity).</text>
</comment>
<comment type="PTM">
    <text evidence="2">Phosphorylated on serine and threonine residues. Aldosterone and insulin increase the basal level of phosphorylation.</text>
</comment>
<comment type="PTM">
    <text evidence="3">N-glycosylated. N-glycosylation is required for interaction with BPIFA1.</text>
</comment>
<comment type="similarity">
    <text evidence="7">Belongs to the amiloride-sensitive sodium channel (TC 1.A.6) family. SCNN1B subfamily.</text>
</comment>
<proteinExistence type="inferred from homology"/>
<evidence type="ECO:0000250" key="1">
    <source>
        <dbReference type="UniProtKB" id="P37089"/>
    </source>
</evidence>
<evidence type="ECO:0000250" key="2">
    <source>
        <dbReference type="UniProtKB" id="P37090"/>
    </source>
</evidence>
<evidence type="ECO:0000250" key="3">
    <source>
        <dbReference type="UniProtKB" id="P51168"/>
    </source>
</evidence>
<evidence type="ECO:0000250" key="4">
    <source>
        <dbReference type="UniProtKB" id="Q9WU38"/>
    </source>
</evidence>
<evidence type="ECO:0000255" key="5"/>
<evidence type="ECO:0000256" key="6">
    <source>
        <dbReference type="SAM" id="MobiDB-lite"/>
    </source>
</evidence>
<evidence type="ECO:0000305" key="7"/>
<accession>H2QAR6</accession>
<reference key="1">
    <citation type="journal article" date="2005" name="Nature">
        <title>Initial sequence of the chimpanzee genome and comparison with the human genome.</title>
        <authorList>
            <consortium name="Chimpanzee sequencing and analysis consortium"/>
        </authorList>
    </citation>
    <scope>NUCLEOTIDE SEQUENCE [LARGE SCALE GENOMIC DNA]</scope>
</reference>
<dbReference type="EMBL" id="AACZ03104220">
    <property type="status" value="NOT_ANNOTATED_CDS"/>
    <property type="molecule type" value="Genomic_DNA"/>
</dbReference>
<dbReference type="EMBL" id="AACZ03104221">
    <property type="status" value="NOT_ANNOTATED_CDS"/>
    <property type="molecule type" value="Genomic_DNA"/>
</dbReference>
<dbReference type="EMBL" id="AACZ03104222">
    <property type="status" value="NOT_ANNOTATED_CDS"/>
    <property type="molecule type" value="Genomic_DNA"/>
</dbReference>
<dbReference type="EMBL" id="AACZ03104223">
    <property type="status" value="NOT_ANNOTATED_CDS"/>
    <property type="molecule type" value="Genomic_DNA"/>
</dbReference>
<dbReference type="EMBL" id="AACZ03104224">
    <property type="status" value="NOT_ANNOTATED_CDS"/>
    <property type="molecule type" value="Genomic_DNA"/>
</dbReference>
<dbReference type="EMBL" id="AACZ03104225">
    <property type="status" value="NOT_ANNOTATED_CDS"/>
    <property type="molecule type" value="Genomic_DNA"/>
</dbReference>
<dbReference type="EMBL" id="AACZ03104226">
    <property type="status" value="NOT_ANNOTATED_CDS"/>
    <property type="molecule type" value="Genomic_DNA"/>
</dbReference>
<dbReference type="EMBL" id="AACZ03104227">
    <property type="status" value="NOT_ANNOTATED_CDS"/>
    <property type="molecule type" value="Genomic_DNA"/>
</dbReference>
<dbReference type="EMBL" id="AACZ03107266">
    <property type="status" value="NOT_ANNOTATED_CDS"/>
    <property type="molecule type" value="Genomic_DNA"/>
</dbReference>
<dbReference type="SMR" id="H2QAR6"/>
<dbReference type="STRING" id="9598.ENSPTRP00000013457"/>
<dbReference type="GlyCosmos" id="H2QAR6">
    <property type="glycosylation" value="2 sites, No reported glycans"/>
</dbReference>
<dbReference type="PaxDb" id="9598-ENSPTRP00000013457"/>
<dbReference type="eggNOG" id="KOG4294">
    <property type="taxonomic scope" value="Eukaryota"/>
</dbReference>
<dbReference type="HOGENOM" id="CLU_020415_0_0_1"/>
<dbReference type="InParanoid" id="H2QAR6"/>
<dbReference type="TreeFam" id="TF330663"/>
<dbReference type="Proteomes" id="UP000002277">
    <property type="component" value="Unplaced"/>
</dbReference>
<dbReference type="GO" id="GO:0016324">
    <property type="term" value="C:apical plasma membrane"/>
    <property type="evidence" value="ECO:0000250"/>
    <property type="project" value="UniProtKB"/>
</dbReference>
<dbReference type="GO" id="GO:0030659">
    <property type="term" value="C:cytoplasmic vesicle membrane"/>
    <property type="evidence" value="ECO:0007669"/>
    <property type="project" value="UniProtKB-SubCell"/>
</dbReference>
<dbReference type="GO" id="GO:0005886">
    <property type="term" value="C:plasma membrane"/>
    <property type="evidence" value="ECO:0000318"/>
    <property type="project" value="GO_Central"/>
</dbReference>
<dbReference type="GO" id="GO:0034706">
    <property type="term" value="C:sodium channel complex"/>
    <property type="evidence" value="ECO:0000318"/>
    <property type="project" value="GO_Central"/>
</dbReference>
<dbReference type="GO" id="GO:0015280">
    <property type="term" value="F:ligand-gated sodium channel activity"/>
    <property type="evidence" value="ECO:0000318"/>
    <property type="project" value="GO_Central"/>
</dbReference>
<dbReference type="GO" id="GO:0035725">
    <property type="term" value="P:sodium ion transmembrane transport"/>
    <property type="evidence" value="ECO:0000250"/>
    <property type="project" value="UniProtKB"/>
</dbReference>
<dbReference type="FunFam" id="2.60.470.10:FF:000003">
    <property type="entry name" value="Amiloride-sensitive sodium channel subunit beta"/>
    <property type="match status" value="1"/>
</dbReference>
<dbReference type="FunFam" id="1.10.287.770:FF:000002">
    <property type="entry name" value="Amiloride-sensitive sodium channel subunit beta 1"/>
    <property type="match status" value="1"/>
</dbReference>
<dbReference type="Gene3D" id="2.60.470.10">
    <property type="entry name" value="Acid-sensing ion channels like domains"/>
    <property type="match status" value="1"/>
</dbReference>
<dbReference type="Gene3D" id="1.10.287.770">
    <property type="entry name" value="YojJ-like"/>
    <property type="match status" value="1"/>
</dbReference>
<dbReference type="InterPro" id="IPR001873">
    <property type="entry name" value="ENaC"/>
</dbReference>
<dbReference type="InterPro" id="IPR004724">
    <property type="entry name" value="ENaC_chordates"/>
</dbReference>
<dbReference type="NCBIfam" id="TIGR00859">
    <property type="entry name" value="ENaC"/>
    <property type="match status" value="1"/>
</dbReference>
<dbReference type="PANTHER" id="PTHR11690:SF18">
    <property type="entry name" value="AMILORIDE-SENSITIVE SODIUM CHANNEL SUBUNIT BETA"/>
    <property type="match status" value="1"/>
</dbReference>
<dbReference type="PANTHER" id="PTHR11690">
    <property type="entry name" value="AMILORIDE-SENSITIVE SODIUM CHANNEL-RELATED"/>
    <property type="match status" value="1"/>
</dbReference>
<dbReference type="Pfam" id="PF00858">
    <property type="entry name" value="ASC"/>
    <property type="match status" value="2"/>
</dbReference>
<dbReference type="PRINTS" id="PR01078">
    <property type="entry name" value="AMINACHANNEL"/>
</dbReference>
<keyword id="KW-1003">Cell membrane</keyword>
<keyword id="KW-0968">Cytoplasmic vesicle</keyword>
<keyword id="KW-1015">Disulfide bond</keyword>
<keyword id="KW-0325">Glycoprotein</keyword>
<keyword id="KW-0407">Ion channel</keyword>
<keyword id="KW-0406">Ion transport</keyword>
<keyword id="KW-0472">Membrane</keyword>
<keyword id="KW-0597">Phosphoprotein</keyword>
<keyword id="KW-1185">Reference proteome</keyword>
<keyword id="KW-0915">Sodium</keyword>
<keyword id="KW-0894">Sodium channel</keyword>
<keyword id="KW-0739">Sodium transport</keyword>
<keyword id="KW-0812">Transmembrane</keyword>
<keyword id="KW-1133">Transmembrane helix</keyword>
<keyword id="KW-0813">Transport</keyword>
<keyword id="KW-0832">Ubl conjugation</keyword>
<sequence>MLLHINPAYLFKLLHGFPPWIMPTDGNLGDKNFQMGKPGHREGATMHVKKYLLKGLHRLQKGPGYTYKELLVWYCDNTNTHGPKRIICEGPKKKAMWFLLTLLFTALVCWQWGIFIRTYLSWEVSVSLSVGFKTMDFPAVTICNASPFKYSKIKHLLKDLDELMEAVLERILAPELSHANATRNLNFSIWNHTPLVLIDERNPHHPMVLDLFGDNHNGLTRSSASEKICNAHGCKMAMRLCSLNGTQCTFRNFTSATQAVTEWYILQATNIFAQVPQQELVEMSYPGEQMILACLFGAEPCNYRNFTSIFYPHYGNCYIFNWGMTEKALPSANPGTEFGLKLILDIGQEDYVPFLASTAGVRLMLHEQRSYPFIRDEGIYAMSGTETSIGVLVDKLQRMGEPYSPCTVNGSEVPVQNFYSDYNTTYSIQDFDWAHCYSDLQMSVAQRETCIGMCKESCNDTQYKMTISMADWPSEASEDWIFHVLSQERDQSTNITLSRKGIVKLNIYFQEFNYRTIEESAANNIVWLLSNLGGQFGFWMGGSVLCLIEFGEIIIDFVWITIIKLVALAKSLRQRRAQASYAGPPPTVAELVEAHTNFGFQPDTAPRSPNTGPYPNEQALPIPGTPPPNYDSLRLQPLDVIESDSEGDAI</sequence>
<gene>
    <name evidence="3" type="primary">SCNN1B</name>
</gene>
<feature type="chain" id="PRO_0000432889" description="Epithelial sodium channel subunit beta">
    <location>
        <begin position="1"/>
        <end position="650"/>
    </location>
</feature>
<feature type="topological domain" description="Cytoplasmic" evidence="1">
    <location>
        <begin position="1"/>
        <end position="95"/>
    </location>
</feature>
<feature type="transmembrane region" description="Helical; Name=1" evidence="5">
    <location>
        <begin position="96"/>
        <end position="116"/>
    </location>
</feature>
<feature type="topological domain" description="Extracellular" evidence="1">
    <location>
        <begin position="117"/>
        <end position="542"/>
    </location>
</feature>
<feature type="transmembrane region" description="Helical; Name=2" evidence="5">
    <location>
        <begin position="543"/>
        <end position="563"/>
    </location>
</feature>
<feature type="topological domain" description="Cytoplasmic" evidence="1">
    <location>
        <begin position="564"/>
        <end position="650"/>
    </location>
</feature>
<feature type="region of interest" description="Disordered" evidence="6">
    <location>
        <begin position="600"/>
        <end position="650"/>
    </location>
</feature>
<feature type="short sequence motif" description="PY motif; recruits WW domain-containing proteins and is thereby required for ubiquitination and inhibition of the channel by NEDD4 and NEDD4L" evidence="3">
    <location>
        <begin position="626"/>
        <end position="630"/>
    </location>
</feature>
<feature type="compositionally biased region" description="Acidic residues" evidence="6">
    <location>
        <begin position="641"/>
        <end position="650"/>
    </location>
</feature>
<feature type="modified residue" description="Phosphoserine" evidence="4">
    <location>
        <position position="643"/>
    </location>
</feature>
<feature type="modified residue" description="Phosphoserine" evidence="4">
    <location>
        <position position="645"/>
    </location>
</feature>
<feature type="glycosylation site" description="N-linked (GlcNAc...) asparagine" evidence="5">
    <location>
        <position position="244"/>
    </location>
</feature>
<feature type="glycosylation site" description="N-linked (GlcNAc...) asparagine" evidence="5">
    <location>
        <position position="305"/>
    </location>
</feature>
<feature type="disulfide bond" evidence="3">
    <location>
        <begin position="143"/>
        <end position="317"/>
    </location>
</feature>
<feature type="disulfide bond" evidence="3">
    <location>
        <begin position="229"/>
        <end position="234"/>
    </location>
</feature>
<feature type="disulfide bond" evidence="3">
    <location>
        <begin position="241"/>
        <end position="248"/>
    </location>
</feature>
<feature type="disulfide bond" evidence="3">
    <location>
        <begin position="294"/>
        <end position="301"/>
    </location>
</feature>
<feature type="disulfide bond" evidence="3">
    <location>
        <begin position="406"/>
        <end position="458"/>
    </location>
</feature>
<organism>
    <name type="scientific">Pan troglodytes</name>
    <name type="common">Chimpanzee</name>
    <dbReference type="NCBI Taxonomy" id="9598"/>
    <lineage>
        <taxon>Eukaryota</taxon>
        <taxon>Metazoa</taxon>
        <taxon>Chordata</taxon>
        <taxon>Craniata</taxon>
        <taxon>Vertebrata</taxon>
        <taxon>Euteleostomi</taxon>
        <taxon>Mammalia</taxon>
        <taxon>Eutheria</taxon>
        <taxon>Euarchontoglires</taxon>
        <taxon>Primates</taxon>
        <taxon>Haplorrhini</taxon>
        <taxon>Catarrhini</taxon>
        <taxon>Hominidae</taxon>
        <taxon>Pan</taxon>
    </lineage>
</organism>
<protein>
    <recommendedName>
        <fullName evidence="3">Epithelial sodium channel subunit beta</fullName>
    </recommendedName>
    <alternativeName>
        <fullName>Amiloride-sensitive sodium channel subunit beta</fullName>
    </alternativeName>
    <alternativeName>
        <fullName>Beta-NaCH</fullName>
    </alternativeName>
    <alternativeName>
        <fullName>Epithelial Na(+) channel subunit beta</fullName>
        <shortName>Beta-ENaC</shortName>
    </alternativeName>
    <alternativeName>
        <fullName>Nonvoltage-gated sodium channel 1 subunit beta</fullName>
    </alternativeName>
    <alternativeName>
        <fullName>SCNEB</fullName>
    </alternativeName>
</protein>